<name>RAB18_CHICK</name>
<evidence type="ECO:0000250" key="1"/>
<evidence type="ECO:0000250" key="2">
    <source>
        <dbReference type="UniProtKB" id="P35293"/>
    </source>
</evidence>
<evidence type="ECO:0000250" key="3">
    <source>
        <dbReference type="UniProtKB" id="P62820"/>
    </source>
</evidence>
<evidence type="ECO:0000250" key="4">
    <source>
        <dbReference type="UniProtKB" id="Q9NP72"/>
    </source>
</evidence>
<evidence type="ECO:0000255" key="5"/>
<evidence type="ECO:0000305" key="6"/>
<comment type="function">
    <text evidence="2 4">The small GTPases Rab are key regulators of intracellular membrane trafficking, from the formation of transport vesicles to their fusion with membranes (By similarity). Rabs cycle between an inactive GDP-bound form and an active GTP-bound form that is able to recruit to membranes different sets of downstream effectors directly responsible for vesicle formation, movement, tethering and fusion (By similarity). RAB18 is required for the localization of ZFYVE1 to lipid droplets and for its function in mediating the formation of endoplasmic reticulum-lipid droplets (ER-LD) contacts (By similarity). Also required for maintaining endoplasmic reticulum structure (By similarity). Plays a role in apical endocytosis/recycling (By similarity). Plays a key role in eye and brain development and neurodegeneration (By similarity).</text>
</comment>
<comment type="catalytic activity">
    <reaction evidence="4">
        <text>GTP + H2O = GDP + phosphate + H(+)</text>
        <dbReference type="Rhea" id="RHEA:19669"/>
        <dbReference type="ChEBI" id="CHEBI:15377"/>
        <dbReference type="ChEBI" id="CHEBI:15378"/>
        <dbReference type="ChEBI" id="CHEBI:37565"/>
        <dbReference type="ChEBI" id="CHEBI:43474"/>
        <dbReference type="ChEBI" id="CHEBI:58189"/>
        <dbReference type="EC" id="3.6.5.2"/>
    </reaction>
    <physiologicalReaction direction="left-to-right" evidence="4">
        <dbReference type="Rhea" id="RHEA:19670"/>
    </physiologicalReaction>
</comment>
<comment type="cofactor">
    <cofactor evidence="4">
        <name>Mg(2+)</name>
        <dbReference type="ChEBI" id="CHEBI:18420"/>
    </cofactor>
</comment>
<comment type="activity regulation">
    <text evidence="4">Regulated by guanine nucleotide exchange factors (GEFs) which promote the exchange of bound GDP for free GTP. Regulated by GTPase activating proteins (GAPs) which increase the GTP hydrolysis activity at the ER membrane. Inhibited by GDP dissociation inhibitors (GDIs) which prevent Rab-GDP dissociation.</text>
</comment>
<comment type="subcellular location">
    <subcellularLocation>
        <location evidence="4">Endoplasmic reticulum membrane</location>
    </subcellularLocation>
    <subcellularLocation>
        <location evidence="4">Golgi apparatus</location>
        <location evidence="4">cis-Golgi network membrane</location>
    </subcellularLocation>
    <subcellularLocation>
        <location evidence="4">Lipid droplet</location>
    </subcellularLocation>
    <subcellularLocation>
        <location evidence="2">Apical cell membrane</location>
    </subcellularLocation>
</comment>
<comment type="domain">
    <text evidence="3">Switch 1, switch 2 and the interswitch regions are characteristic of Rab GTPases and mediate the interactions with Rab downstream effectors. The switch regions undergo conformational changes upon nucleotide binding which drive interaction with specific sets of effector proteins, with most effectors only binding to GTP-bound Rab.</text>
</comment>
<comment type="similarity">
    <text evidence="6">Belongs to the small GTPase superfamily. Rab family.</text>
</comment>
<sequence length="206" mass="22954">MDEDVLTTLKILIIGESGVGKSSLLLRFTDDTFDPELAATIGVDFKVKTISVDGNKAKLAIWDTAGQERFRTLTPSYYRGAQGVILVYDVTRRDTFVKLDNWLNELETYCTRNDIVKMLVGNKIDKENREVDRNEGLKFARKHSMLFIEASAKTCDGVQCAFEELVEKIIQTPGLWESESQNKGVKLSNKEEGHGGGACGGYCSML</sequence>
<dbReference type="EC" id="3.6.5.2" evidence="4"/>
<dbReference type="EMBL" id="AJ719773">
    <property type="protein sequence ID" value="CAG31432.1"/>
    <property type="molecule type" value="mRNA"/>
</dbReference>
<dbReference type="RefSeq" id="NP_001006355.1">
    <property type="nucleotide sequence ID" value="NM_001006355.2"/>
</dbReference>
<dbReference type="SMR" id="Q5ZLG1"/>
<dbReference type="BioGRID" id="681433">
    <property type="interactions" value="1"/>
</dbReference>
<dbReference type="FunCoup" id="Q5ZLG1">
    <property type="interactions" value="2646"/>
</dbReference>
<dbReference type="IntAct" id="Q5ZLG1">
    <property type="interactions" value="1"/>
</dbReference>
<dbReference type="STRING" id="9031.ENSGALP00000062764"/>
<dbReference type="PaxDb" id="9031-ENSGALP00000012019"/>
<dbReference type="GeneID" id="420483"/>
<dbReference type="KEGG" id="gga:420483"/>
<dbReference type="CTD" id="22931"/>
<dbReference type="VEuPathDB" id="HostDB:geneid_420483"/>
<dbReference type="eggNOG" id="KOG0080">
    <property type="taxonomic scope" value="Eukaryota"/>
</dbReference>
<dbReference type="HOGENOM" id="CLU_041217_10_7_1"/>
<dbReference type="InParanoid" id="Q5ZLG1"/>
<dbReference type="OMA" id="RVHKMDV"/>
<dbReference type="OrthoDB" id="9989112at2759"/>
<dbReference type="PhylomeDB" id="Q5ZLG1"/>
<dbReference type="TreeFam" id="TF313448"/>
<dbReference type="Reactome" id="R-GGA-6798695">
    <property type="pathway name" value="Neutrophil degranulation"/>
</dbReference>
<dbReference type="Reactome" id="R-GGA-6811436">
    <property type="pathway name" value="COPI-independent Golgi-to-ER retrograde traffic"/>
</dbReference>
<dbReference type="Reactome" id="R-GGA-8876198">
    <property type="pathway name" value="RAB GEFs exchange GTP for GDP on RABs"/>
</dbReference>
<dbReference type="PRO" id="PR:Q5ZLG1"/>
<dbReference type="Proteomes" id="UP000000539">
    <property type="component" value="Chromosome 2"/>
</dbReference>
<dbReference type="Bgee" id="ENSGALG00000007435">
    <property type="expression patterns" value="Expressed in heart and 14 other cell types or tissues"/>
</dbReference>
<dbReference type="GO" id="GO:0016324">
    <property type="term" value="C:apical plasma membrane"/>
    <property type="evidence" value="ECO:0007669"/>
    <property type="project" value="UniProtKB-SubCell"/>
</dbReference>
<dbReference type="GO" id="GO:0033106">
    <property type="term" value="C:cis-Golgi network membrane"/>
    <property type="evidence" value="ECO:0000250"/>
    <property type="project" value="UniProtKB"/>
</dbReference>
<dbReference type="GO" id="GO:0012505">
    <property type="term" value="C:endomembrane system"/>
    <property type="evidence" value="ECO:0000318"/>
    <property type="project" value="GO_Central"/>
</dbReference>
<dbReference type="GO" id="GO:0005789">
    <property type="term" value="C:endoplasmic reticulum membrane"/>
    <property type="evidence" value="ECO:0000250"/>
    <property type="project" value="UniProtKB"/>
</dbReference>
<dbReference type="GO" id="GO:0005794">
    <property type="term" value="C:Golgi apparatus"/>
    <property type="evidence" value="ECO:0000318"/>
    <property type="project" value="GO_Central"/>
</dbReference>
<dbReference type="GO" id="GO:0005811">
    <property type="term" value="C:lipid droplet"/>
    <property type="evidence" value="ECO:0000250"/>
    <property type="project" value="UniProtKB"/>
</dbReference>
<dbReference type="GO" id="GO:0019003">
    <property type="term" value="F:GDP binding"/>
    <property type="evidence" value="ECO:0000250"/>
    <property type="project" value="UniProtKB"/>
</dbReference>
<dbReference type="GO" id="GO:0005525">
    <property type="term" value="F:GTP binding"/>
    <property type="evidence" value="ECO:0007669"/>
    <property type="project" value="UniProtKB-KW"/>
</dbReference>
<dbReference type="GO" id="GO:0003924">
    <property type="term" value="F:GTPase activity"/>
    <property type="evidence" value="ECO:0000250"/>
    <property type="project" value="UniProtKB"/>
</dbReference>
<dbReference type="GO" id="GO:0007420">
    <property type="term" value="P:brain development"/>
    <property type="evidence" value="ECO:0000250"/>
    <property type="project" value="UniProtKB"/>
</dbReference>
<dbReference type="GO" id="GO:0001654">
    <property type="term" value="P:eye development"/>
    <property type="evidence" value="ECO:0000250"/>
    <property type="project" value="UniProtKB"/>
</dbReference>
<dbReference type="GO" id="GO:0006886">
    <property type="term" value="P:intracellular protein transport"/>
    <property type="evidence" value="ECO:0000318"/>
    <property type="project" value="GO_Central"/>
</dbReference>
<dbReference type="GO" id="GO:0034389">
    <property type="term" value="P:lipid droplet organization"/>
    <property type="evidence" value="ECO:0000318"/>
    <property type="project" value="GO_Central"/>
</dbReference>
<dbReference type="CDD" id="cd01863">
    <property type="entry name" value="Rab18"/>
    <property type="match status" value="1"/>
</dbReference>
<dbReference type="FunFam" id="3.40.50.300:FF:000430">
    <property type="entry name" value="Probable Ras-related protein Rab-18"/>
    <property type="match status" value="1"/>
</dbReference>
<dbReference type="Gene3D" id="3.40.50.300">
    <property type="entry name" value="P-loop containing nucleotide triphosphate hydrolases"/>
    <property type="match status" value="1"/>
</dbReference>
<dbReference type="InterPro" id="IPR027417">
    <property type="entry name" value="P-loop_NTPase"/>
</dbReference>
<dbReference type="InterPro" id="IPR050227">
    <property type="entry name" value="Rab"/>
</dbReference>
<dbReference type="InterPro" id="IPR025662">
    <property type="entry name" value="Sigma_54_int_dom_ATP-bd_1"/>
</dbReference>
<dbReference type="InterPro" id="IPR005225">
    <property type="entry name" value="Small_GTP-bd"/>
</dbReference>
<dbReference type="InterPro" id="IPR001806">
    <property type="entry name" value="Small_GTPase"/>
</dbReference>
<dbReference type="NCBIfam" id="TIGR00231">
    <property type="entry name" value="small_GTP"/>
    <property type="match status" value="1"/>
</dbReference>
<dbReference type="PANTHER" id="PTHR47977">
    <property type="entry name" value="RAS-RELATED PROTEIN RAB"/>
    <property type="match status" value="1"/>
</dbReference>
<dbReference type="Pfam" id="PF00071">
    <property type="entry name" value="Ras"/>
    <property type="match status" value="1"/>
</dbReference>
<dbReference type="PRINTS" id="PR00449">
    <property type="entry name" value="RASTRNSFRMNG"/>
</dbReference>
<dbReference type="SMART" id="SM00177">
    <property type="entry name" value="ARF"/>
    <property type="match status" value="1"/>
</dbReference>
<dbReference type="SMART" id="SM00175">
    <property type="entry name" value="RAB"/>
    <property type="match status" value="1"/>
</dbReference>
<dbReference type="SMART" id="SM00176">
    <property type="entry name" value="RAN"/>
    <property type="match status" value="1"/>
</dbReference>
<dbReference type="SMART" id="SM00173">
    <property type="entry name" value="RAS"/>
    <property type="match status" value="1"/>
</dbReference>
<dbReference type="SMART" id="SM00174">
    <property type="entry name" value="RHO"/>
    <property type="match status" value="1"/>
</dbReference>
<dbReference type="SUPFAM" id="SSF52540">
    <property type="entry name" value="P-loop containing nucleoside triphosphate hydrolases"/>
    <property type="match status" value="1"/>
</dbReference>
<dbReference type="PROSITE" id="PS51419">
    <property type="entry name" value="RAB"/>
    <property type="match status" value="1"/>
</dbReference>
<accession>Q5ZLG1</accession>
<protein>
    <recommendedName>
        <fullName>Ras-related protein Rab-18</fullName>
        <ecNumber evidence="4">3.6.5.2</ecNumber>
    </recommendedName>
</protein>
<reference key="1">
    <citation type="journal article" date="2005" name="Genome Biol.">
        <title>Full-length cDNAs from chicken bursal lymphocytes to facilitate gene function analysis.</title>
        <authorList>
            <person name="Caldwell R.B."/>
            <person name="Kierzek A.M."/>
            <person name="Arakawa H."/>
            <person name="Bezzubov Y."/>
            <person name="Zaim J."/>
            <person name="Fiedler P."/>
            <person name="Kutter S."/>
            <person name="Blagodatski A."/>
            <person name="Kostovska D."/>
            <person name="Koter M."/>
            <person name="Plachy J."/>
            <person name="Carninci P."/>
            <person name="Hayashizaki Y."/>
            <person name="Buerstedde J.-M."/>
        </authorList>
    </citation>
    <scope>NUCLEOTIDE SEQUENCE [LARGE SCALE MRNA]</scope>
    <source>
        <strain>CB</strain>
        <tissue>Bursa of Fabricius</tissue>
    </source>
</reference>
<proteinExistence type="evidence at transcript level"/>
<feature type="chain" id="PRO_0000121197" description="Ras-related protein Rab-18">
    <location>
        <begin position="1"/>
        <end position="203"/>
    </location>
</feature>
<feature type="propeptide" id="PRO_0000370765" description="Removed in mature form" evidence="5">
    <location>
        <begin position="204"/>
        <end position="206"/>
    </location>
</feature>
<feature type="short sequence motif" description="Switch 1" evidence="3">
    <location>
        <begin position="31"/>
        <end position="45"/>
    </location>
</feature>
<feature type="short sequence motif" description="Switch 2" evidence="3">
    <location>
        <begin position="63"/>
        <end position="80"/>
    </location>
</feature>
<feature type="binding site" evidence="4">
    <location>
        <position position="17"/>
    </location>
    <ligand>
        <name>GTP</name>
        <dbReference type="ChEBI" id="CHEBI:37565"/>
    </ligand>
</feature>
<feature type="binding site" evidence="4">
    <location>
        <position position="20"/>
    </location>
    <ligand>
        <name>GTP</name>
        <dbReference type="ChEBI" id="CHEBI:37565"/>
    </ligand>
</feature>
<feature type="binding site" evidence="4">
    <location>
        <position position="21"/>
    </location>
    <ligand>
        <name>GTP</name>
        <dbReference type="ChEBI" id="CHEBI:37565"/>
    </ligand>
</feature>
<feature type="binding site" evidence="4">
    <location>
        <position position="22"/>
    </location>
    <ligand>
        <name>GTP</name>
        <dbReference type="ChEBI" id="CHEBI:37565"/>
    </ligand>
</feature>
<feature type="binding site" evidence="4">
    <location>
        <position position="22"/>
    </location>
    <ligand>
        <name>Mg(2+)</name>
        <dbReference type="ChEBI" id="CHEBI:18420"/>
    </ligand>
</feature>
<feature type="binding site" evidence="4">
    <location>
        <position position="23"/>
    </location>
    <ligand>
        <name>GTP</name>
        <dbReference type="ChEBI" id="CHEBI:37565"/>
    </ligand>
</feature>
<feature type="binding site" evidence="4">
    <location>
        <position position="34"/>
    </location>
    <ligand>
        <name>GTP</name>
        <dbReference type="ChEBI" id="CHEBI:37565"/>
    </ligand>
</feature>
<feature type="binding site" evidence="4">
    <location>
        <position position="35"/>
    </location>
    <ligand>
        <name>GTP</name>
        <dbReference type="ChEBI" id="CHEBI:37565"/>
    </ligand>
</feature>
<feature type="binding site" evidence="4">
    <location>
        <position position="40"/>
    </location>
    <ligand>
        <name>GTP</name>
        <dbReference type="ChEBI" id="CHEBI:37565"/>
    </ligand>
</feature>
<feature type="binding site" evidence="4">
    <location>
        <position position="40"/>
    </location>
    <ligand>
        <name>Mg(2+)</name>
        <dbReference type="ChEBI" id="CHEBI:18420"/>
    </ligand>
</feature>
<feature type="binding site" evidence="4">
    <location>
        <position position="66"/>
    </location>
    <ligand>
        <name>GTP</name>
        <dbReference type="ChEBI" id="CHEBI:37565"/>
    </ligand>
</feature>
<feature type="binding site" evidence="4">
    <location>
        <position position="123"/>
    </location>
    <ligand>
        <name>GTP</name>
        <dbReference type="ChEBI" id="CHEBI:37565"/>
    </ligand>
</feature>
<feature type="binding site" evidence="4">
    <location>
        <position position="125"/>
    </location>
    <ligand>
        <name>GTP</name>
        <dbReference type="ChEBI" id="CHEBI:37565"/>
    </ligand>
</feature>
<feature type="binding site" evidence="4">
    <location>
        <position position="152"/>
    </location>
    <ligand>
        <name>GTP</name>
        <dbReference type="ChEBI" id="CHEBI:37565"/>
    </ligand>
</feature>
<feature type="modified residue" description="Cysteine methyl ester" evidence="5">
    <location>
        <position position="203"/>
    </location>
</feature>
<feature type="lipid moiety-binding region" description="S-palmitoyl cysteine" evidence="5">
    <location>
        <position position="199"/>
    </location>
</feature>
<feature type="lipid moiety-binding region" description="S-geranylgeranyl cysteine" evidence="1">
    <location>
        <position position="203"/>
    </location>
</feature>
<gene>
    <name type="primary">RAB18</name>
    <name type="ORF">RCJMB04_6g4</name>
</gene>
<organism>
    <name type="scientific">Gallus gallus</name>
    <name type="common">Chicken</name>
    <dbReference type="NCBI Taxonomy" id="9031"/>
    <lineage>
        <taxon>Eukaryota</taxon>
        <taxon>Metazoa</taxon>
        <taxon>Chordata</taxon>
        <taxon>Craniata</taxon>
        <taxon>Vertebrata</taxon>
        <taxon>Euteleostomi</taxon>
        <taxon>Archelosauria</taxon>
        <taxon>Archosauria</taxon>
        <taxon>Dinosauria</taxon>
        <taxon>Saurischia</taxon>
        <taxon>Theropoda</taxon>
        <taxon>Coelurosauria</taxon>
        <taxon>Aves</taxon>
        <taxon>Neognathae</taxon>
        <taxon>Galloanserae</taxon>
        <taxon>Galliformes</taxon>
        <taxon>Phasianidae</taxon>
        <taxon>Phasianinae</taxon>
        <taxon>Gallus</taxon>
    </lineage>
</organism>
<keyword id="KW-1003">Cell membrane</keyword>
<keyword id="KW-0217">Developmental protein</keyword>
<keyword id="KW-0256">Endoplasmic reticulum</keyword>
<keyword id="KW-0333">Golgi apparatus</keyword>
<keyword id="KW-0342">GTP-binding</keyword>
<keyword id="KW-0378">Hydrolase</keyword>
<keyword id="KW-0551">Lipid droplet</keyword>
<keyword id="KW-0449">Lipoprotein</keyword>
<keyword id="KW-0460">Magnesium</keyword>
<keyword id="KW-0472">Membrane</keyword>
<keyword id="KW-0479">Metal-binding</keyword>
<keyword id="KW-0488">Methylation</keyword>
<keyword id="KW-0547">Nucleotide-binding</keyword>
<keyword id="KW-0564">Palmitate</keyword>
<keyword id="KW-0636">Prenylation</keyword>
<keyword id="KW-0653">Protein transport</keyword>
<keyword id="KW-1185">Reference proteome</keyword>
<keyword id="KW-0813">Transport</keyword>